<organism>
    <name type="scientific">Mycobacterium sp. (strain MCS)</name>
    <dbReference type="NCBI Taxonomy" id="164756"/>
    <lineage>
        <taxon>Bacteria</taxon>
        <taxon>Bacillati</taxon>
        <taxon>Actinomycetota</taxon>
        <taxon>Actinomycetes</taxon>
        <taxon>Mycobacteriales</taxon>
        <taxon>Mycobacteriaceae</taxon>
        <taxon>Mycobacterium</taxon>
    </lineage>
</organism>
<feature type="chain" id="PRO_0000307027" description="Aspartate 1-decarboxylase beta chain" evidence="1">
    <location>
        <begin position="1"/>
        <end position="24"/>
    </location>
</feature>
<feature type="chain" id="PRO_0000307028" description="Aspartate 1-decarboxylase alpha chain" evidence="1">
    <location>
        <begin position="25"/>
        <end position="135"/>
    </location>
</feature>
<feature type="active site" description="Schiff-base intermediate with substrate; via pyruvic acid" evidence="1">
    <location>
        <position position="25"/>
    </location>
</feature>
<feature type="active site" description="Proton donor" evidence="1">
    <location>
        <position position="58"/>
    </location>
</feature>
<feature type="binding site" evidence="1">
    <location>
        <position position="57"/>
    </location>
    <ligand>
        <name>substrate</name>
    </ligand>
</feature>
<feature type="binding site" evidence="1">
    <location>
        <begin position="73"/>
        <end position="75"/>
    </location>
    <ligand>
        <name>substrate</name>
    </ligand>
</feature>
<feature type="modified residue" description="Pyruvic acid (Ser)" evidence="1">
    <location>
        <position position="25"/>
    </location>
</feature>
<sequence>MLRTMLKSKIHRATVTQSDLHYVGSVTIDADLMDAADLIEGEQVTIVDIDNGNRLVTYAITGARGSGVIGINGAAAHLVHPGDLVILIAYGTMEDAEARAYQPRVVFVDADNRQVHLGADPAMVPDTAVDLMSPR</sequence>
<proteinExistence type="inferred from homology"/>
<gene>
    <name evidence="1" type="primary">panD</name>
    <name type="ordered locus">Mmcs_4761</name>
</gene>
<comment type="function">
    <text evidence="1">Catalyzes the pyruvoyl-dependent decarboxylation of aspartate to produce beta-alanine.</text>
</comment>
<comment type="catalytic activity">
    <reaction evidence="1">
        <text>L-aspartate + H(+) = beta-alanine + CO2</text>
        <dbReference type="Rhea" id="RHEA:19497"/>
        <dbReference type="ChEBI" id="CHEBI:15378"/>
        <dbReference type="ChEBI" id="CHEBI:16526"/>
        <dbReference type="ChEBI" id="CHEBI:29991"/>
        <dbReference type="ChEBI" id="CHEBI:57966"/>
        <dbReference type="EC" id="4.1.1.11"/>
    </reaction>
</comment>
<comment type="cofactor">
    <cofactor evidence="1">
        <name>pyruvate</name>
        <dbReference type="ChEBI" id="CHEBI:15361"/>
    </cofactor>
    <text evidence="1">Binds 1 pyruvoyl group covalently per subunit.</text>
</comment>
<comment type="pathway">
    <text evidence="1">Cofactor biosynthesis; (R)-pantothenate biosynthesis; beta-alanine from L-aspartate: step 1/1.</text>
</comment>
<comment type="subunit">
    <text evidence="1">Heterooctamer of four alpha and four beta subunits.</text>
</comment>
<comment type="subcellular location">
    <subcellularLocation>
        <location evidence="1">Cytoplasm</location>
    </subcellularLocation>
</comment>
<comment type="PTM">
    <text evidence="1">Is synthesized initially as an inactive proenzyme, which is activated by self-cleavage at a specific serine bond to produce a beta-subunit with a hydroxyl group at its C-terminus and an alpha-subunit with a pyruvoyl group at its N-terminus.</text>
</comment>
<comment type="similarity">
    <text evidence="1">Belongs to the PanD family.</text>
</comment>
<keyword id="KW-0068">Autocatalytic cleavage</keyword>
<keyword id="KW-0963">Cytoplasm</keyword>
<keyword id="KW-0210">Decarboxylase</keyword>
<keyword id="KW-0456">Lyase</keyword>
<keyword id="KW-0566">Pantothenate biosynthesis</keyword>
<keyword id="KW-0670">Pyruvate</keyword>
<keyword id="KW-0704">Schiff base</keyword>
<keyword id="KW-0865">Zymogen</keyword>
<protein>
    <recommendedName>
        <fullName evidence="1">Aspartate 1-decarboxylase</fullName>
        <ecNumber evidence="1">4.1.1.11</ecNumber>
    </recommendedName>
    <alternativeName>
        <fullName evidence="1">Aspartate alpha-decarboxylase</fullName>
    </alternativeName>
    <component>
        <recommendedName>
            <fullName evidence="1">Aspartate 1-decarboxylase beta chain</fullName>
        </recommendedName>
    </component>
    <component>
        <recommendedName>
            <fullName evidence="1">Aspartate 1-decarboxylase alpha chain</fullName>
        </recommendedName>
    </component>
</protein>
<dbReference type="EC" id="4.1.1.11" evidence="1"/>
<dbReference type="EMBL" id="CP000384">
    <property type="protein sequence ID" value="ABG10865.1"/>
    <property type="molecule type" value="Genomic_DNA"/>
</dbReference>
<dbReference type="SMR" id="Q1B2L9"/>
<dbReference type="KEGG" id="mmc:Mmcs_4761"/>
<dbReference type="HOGENOM" id="CLU_115305_2_0_11"/>
<dbReference type="BioCyc" id="MSP164756:G1G6O-4863-MONOMER"/>
<dbReference type="UniPathway" id="UPA00028">
    <property type="reaction ID" value="UER00002"/>
</dbReference>
<dbReference type="GO" id="GO:0005829">
    <property type="term" value="C:cytosol"/>
    <property type="evidence" value="ECO:0007669"/>
    <property type="project" value="TreeGrafter"/>
</dbReference>
<dbReference type="GO" id="GO:0004068">
    <property type="term" value="F:aspartate 1-decarboxylase activity"/>
    <property type="evidence" value="ECO:0007669"/>
    <property type="project" value="UniProtKB-UniRule"/>
</dbReference>
<dbReference type="GO" id="GO:0006523">
    <property type="term" value="P:alanine biosynthetic process"/>
    <property type="evidence" value="ECO:0007669"/>
    <property type="project" value="InterPro"/>
</dbReference>
<dbReference type="GO" id="GO:0015940">
    <property type="term" value="P:pantothenate biosynthetic process"/>
    <property type="evidence" value="ECO:0007669"/>
    <property type="project" value="UniProtKB-UniRule"/>
</dbReference>
<dbReference type="CDD" id="cd06919">
    <property type="entry name" value="Asp_decarbox"/>
    <property type="match status" value="1"/>
</dbReference>
<dbReference type="Gene3D" id="2.40.40.20">
    <property type="match status" value="1"/>
</dbReference>
<dbReference type="HAMAP" id="MF_00446">
    <property type="entry name" value="PanD"/>
    <property type="match status" value="1"/>
</dbReference>
<dbReference type="InterPro" id="IPR009010">
    <property type="entry name" value="Asp_de-COase-like_dom_sf"/>
</dbReference>
<dbReference type="InterPro" id="IPR003190">
    <property type="entry name" value="Asp_decarbox"/>
</dbReference>
<dbReference type="NCBIfam" id="TIGR00223">
    <property type="entry name" value="panD"/>
    <property type="match status" value="1"/>
</dbReference>
<dbReference type="PANTHER" id="PTHR21012">
    <property type="entry name" value="ASPARTATE 1-DECARBOXYLASE"/>
    <property type="match status" value="1"/>
</dbReference>
<dbReference type="PANTHER" id="PTHR21012:SF0">
    <property type="entry name" value="ASPARTATE 1-DECARBOXYLASE"/>
    <property type="match status" value="1"/>
</dbReference>
<dbReference type="Pfam" id="PF02261">
    <property type="entry name" value="Asp_decarbox"/>
    <property type="match status" value="1"/>
</dbReference>
<dbReference type="PIRSF" id="PIRSF006246">
    <property type="entry name" value="Asp_decarbox"/>
    <property type="match status" value="1"/>
</dbReference>
<dbReference type="SUPFAM" id="SSF50692">
    <property type="entry name" value="ADC-like"/>
    <property type="match status" value="1"/>
</dbReference>
<name>PAND_MYCSS</name>
<reference key="1">
    <citation type="submission" date="2006-06" db="EMBL/GenBank/DDBJ databases">
        <title>Complete sequence of chromosome of Mycobacterium sp. MCS.</title>
        <authorList>
            <consortium name="US DOE Joint Genome Institute"/>
            <person name="Copeland A."/>
            <person name="Lucas S."/>
            <person name="Lapidus A."/>
            <person name="Barry K."/>
            <person name="Detter J.C."/>
            <person name="Glavina del Rio T."/>
            <person name="Hammon N."/>
            <person name="Israni S."/>
            <person name="Dalin E."/>
            <person name="Tice H."/>
            <person name="Pitluck S."/>
            <person name="Martinez M."/>
            <person name="Schmutz J."/>
            <person name="Larimer F."/>
            <person name="Land M."/>
            <person name="Hauser L."/>
            <person name="Kyrpides N."/>
            <person name="Kim E."/>
            <person name="Miller C.D."/>
            <person name="Hughes J.E."/>
            <person name="Anderson A.J."/>
            <person name="Sims R.C."/>
            <person name="Richardson P."/>
        </authorList>
    </citation>
    <scope>NUCLEOTIDE SEQUENCE [LARGE SCALE GENOMIC DNA]</scope>
    <source>
        <strain>MCS</strain>
    </source>
</reference>
<evidence type="ECO:0000255" key="1">
    <source>
        <dbReference type="HAMAP-Rule" id="MF_00446"/>
    </source>
</evidence>
<accession>Q1B2L9</accession>